<protein>
    <recommendedName>
        <fullName evidence="1">DNA repair protein RecO</fullName>
    </recommendedName>
    <alternativeName>
        <fullName evidence="1">Recombination protein O</fullName>
    </alternativeName>
</protein>
<organism>
    <name type="scientific">Agrobacterium fabrum (strain C58 / ATCC 33970)</name>
    <name type="common">Agrobacterium tumefaciens (strain C58)</name>
    <dbReference type="NCBI Taxonomy" id="176299"/>
    <lineage>
        <taxon>Bacteria</taxon>
        <taxon>Pseudomonadati</taxon>
        <taxon>Pseudomonadota</taxon>
        <taxon>Alphaproteobacteria</taxon>
        <taxon>Hyphomicrobiales</taxon>
        <taxon>Rhizobiaceae</taxon>
        <taxon>Rhizobium/Agrobacterium group</taxon>
        <taxon>Agrobacterium</taxon>
        <taxon>Agrobacterium tumefaciens complex</taxon>
    </lineage>
</organism>
<feature type="chain" id="PRO_0000204922" description="DNA repair protein RecO">
    <location>
        <begin position="1"/>
        <end position="254"/>
    </location>
</feature>
<sequence length="254" mass="27906">MQWQDEAIILGVKRHGETSVIAEVMTPSRGRHLGMVRSGRSRTMQPVLQAGNRVDVIWRARLHDHLGEFRIEPLQLRAGQLMETATAVYGVQAMGALLRLLPERDPHPHLYQALDVILDNLHDPVDAGELFVRFELAVLNDLGFGLDLSECAATGLRSDLIYVSPKTGRAVCRTAGAPYAARMLALPAFLGEGQSKAADPESLAAAFRLTDHFLHRHVYDPRGLNENAARDGFVQAALKALERKAEPPALDKAV</sequence>
<name>RECO_AGRFC</name>
<gene>
    <name evidence="1" type="primary">recO</name>
    <name type="ordered locus">Atu1039</name>
    <name type="ORF">AGR_C_1915</name>
</gene>
<evidence type="ECO:0000255" key="1">
    <source>
        <dbReference type="HAMAP-Rule" id="MF_00201"/>
    </source>
</evidence>
<dbReference type="EMBL" id="AE007869">
    <property type="protein sequence ID" value="AAK86847.1"/>
    <property type="molecule type" value="Genomic_DNA"/>
</dbReference>
<dbReference type="PIR" id="AF2704">
    <property type="entry name" value="AF2704"/>
</dbReference>
<dbReference type="PIR" id="F97486">
    <property type="entry name" value="F97486"/>
</dbReference>
<dbReference type="RefSeq" id="NP_354062.1">
    <property type="nucleotide sequence ID" value="NC_003062.2"/>
</dbReference>
<dbReference type="RefSeq" id="WP_010971349.1">
    <property type="nucleotide sequence ID" value="NC_003062.2"/>
</dbReference>
<dbReference type="SMR" id="Q8UGJ8"/>
<dbReference type="STRING" id="176299.Atu1039"/>
<dbReference type="EnsemblBacteria" id="AAK86847">
    <property type="protein sequence ID" value="AAK86847"/>
    <property type="gene ID" value="Atu1039"/>
</dbReference>
<dbReference type="GeneID" id="1133077"/>
<dbReference type="KEGG" id="atu:Atu1039"/>
<dbReference type="PATRIC" id="fig|176299.10.peg.1051"/>
<dbReference type="eggNOG" id="COG1381">
    <property type="taxonomic scope" value="Bacteria"/>
</dbReference>
<dbReference type="HOGENOM" id="CLU_086029_0_0_5"/>
<dbReference type="OrthoDB" id="9804792at2"/>
<dbReference type="PhylomeDB" id="Q8UGJ8"/>
<dbReference type="BioCyc" id="AGRO:ATU1039-MONOMER"/>
<dbReference type="Proteomes" id="UP000000813">
    <property type="component" value="Chromosome circular"/>
</dbReference>
<dbReference type="GO" id="GO:0043590">
    <property type="term" value="C:bacterial nucleoid"/>
    <property type="evidence" value="ECO:0007669"/>
    <property type="project" value="TreeGrafter"/>
</dbReference>
<dbReference type="GO" id="GO:0006310">
    <property type="term" value="P:DNA recombination"/>
    <property type="evidence" value="ECO:0007669"/>
    <property type="project" value="UniProtKB-UniRule"/>
</dbReference>
<dbReference type="GO" id="GO:0006302">
    <property type="term" value="P:double-strand break repair"/>
    <property type="evidence" value="ECO:0007669"/>
    <property type="project" value="TreeGrafter"/>
</dbReference>
<dbReference type="Gene3D" id="2.40.50.140">
    <property type="entry name" value="Nucleic acid-binding proteins"/>
    <property type="match status" value="1"/>
</dbReference>
<dbReference type="Gene3D" id="1.20.1440.120">
    <property type="entry name" value="Recombination protein O, C-terminal domain"/>
    <property type="match status" value="1"/>
</dbReference>
<dbReference type="HAMAP" id="MF_00201">
    <property type="entry name" value="RecO"/>
    <property type="match status" value="1"/>
</dbReference>
<dbReference type="InterPro" id="IPR037278">
    <property type="entry name" value="ARFGAP/RecO"/>
</dbReference>
<dbReference type="InterPro" id="IPR022572">
    <property type="entry name" value="DNA_rep/recomb_RecO_N"/>
</dbReference>
<dbReference type="InterPro" id="IPR012340">
    <property type="entry name" value="NA-bd_OB-fold"/>
</dbReference>
<dbReference type="InterPro" id="IPR003717">
    <property type="entry name" value="RecO"/>
</dbReference>
<dbReference type="InterPro" id="IPR042242">
    <property type="entry name" value="RecO_C"/>
</dbReference>
<dbReference type="NCBIfam" id="TIGR00613">
    <property type="entry name" value="reco"/>
    <property type="match status" value="1"/>
</dbReference>
<dbReference type="PANTHER" id="PTHR33991">
    <property type="entry name" value="DNA REPAIR PROTEIN RECO"/>
    <property type="match status" value="1"/>
</dbReference>
<dbReference type="PANTHER" id="PTHR33991:SF1">
    <property type="entry name" value="DNA REPAIR PROTEIN RECO"/>
    <property type="match status" value="1"/>
</dbReference>
<dbReference type="Pfam" id="PF02565">
    <property type="entry name" value="RecO_C"/>
    <property type="match status" value="1"/>
</dbReference>
<dbReference type="Pfam" id="PF11967">
    <property type="entry name" value="RecO_N"/>
    <property type="match status" value="1"/>
</dbReference>
<dbReference type="SUPFAM" id="SSF57863">
    <property type="entry name" value="ArfGap/RecO-like zinc finger"/>
    <property type="match status" value="1"/>
</dbReference>
<dbReference type="SUPFAM" id="SSF50249">
    <property type="entry name" value="Nucleic acid-binding proteins"/>
    <property type="match status" value="1"/>
</dbReference>
<proteinExistence type="inferred from homology"/>
<comment type="function">
    <text evidence="1">Involved in DNA repair and RecF pathway recombination.</text>
</comment>
<comment type="similarity">
    <text evidence="1">Belongs to the RecO family.</text>
</comment>
<accession>Q8UGJ8</accession>
<reference key="1">
    <citation type="journal article" date="2001" name="Science">
        <title>The genome of the natural genetic engineer Agrobacterium tumefaciens C58.</title>
        <authorList>
            <person name="Wood D.W."/>
            <person name="Setubal J.C."/>
            <person name="Kaul R."/>
            <person name="Monks D.E."/>
            <person name="Kitajima J.P."/>
            <person name="Okura V.K."/>
            <person name="Zhou Y."/>
            <person name="Chen L."/>
            <person name="Wood G.E."/>
            <person name="Almeida N.F. Jr."/>
            <person name="Woo L."/>
            <person name="Chen Y."/>
            <person name="Paulsen I.T."/>
            <person name="Eisen J.A."/>
            <person name="Karp P.D."/>
            <person name="Bovee D. Sr."/>
            <person name="Chapman P."/>
            <person name="Clendenning J."/>
            <person name="Deatherage G."/>
            <person name="Gillet W."/>
            <person name="Grant C."/>
            <person name="Kutyavin T."/>
            <person name="Levy R."/>
            <person name="Li M.-J."/>
            <person name="McClelland E."/>
            <person name="Palmieri A."/>
            <person name="Raymond C."/>
            <person name="Rouse G."/>
            <person name="Saenphimmachak C."/>
            <person name="Wu Z."/>
            <person name="Romero P."/>
            <person name="Gordon D."/>
            <person name="Zhang S."/>
            <person name="Yoo H."/>
            <person name="Tao Y."/>
            <person name="Biddle P."/>
            <person name="Jung M."/>
            <person name="Krespan W."/>
            <person name="Perry M."/>
            <person name="Gordon-Kamm B."/>
            <person name="Liao L."/>
            <person name="Kim S."/>
            <person name="Hendrick C."/>
            <person name="Zhao Z.-Y."/>
            <person name="Dolan M."/>
            <person name="Chumley F."/>
            <person name="Tingey S.V."/>
            <person name="Tomb J.-F."/>
            <person name="Gordon M.P."/>
            <person name="Olson M.V."/>
            <person name="Nester E.W."/>
        </authorList>
    </citation>
    <scope>NUCLEOTIDE SEQUENCE [LARGE SCALE GENOMIC DNA]</scope>
    <source>
        <strain>C58 / ATCC 33970</strain>
    </source>
</reference>
<reference key="2">
    <citation type="journal article" date="2001" name="Science">
        <title>Genome sequence of the plant pathogen and biotechnology agent Agrobacterium tumefaciens C58.</title>
        <authorList>
            <person name="Goodner B."/>
            <person name="Hinkle G."/>
            <person name="Gattung S."/>
            <person name="Miller N."/>
            <person name="Blanchard M."/>
            <person name="Qurollo B."/>
            <person name="Goldman B.S."/>
            <person name="Cao Y."/>
            <person name="Askenazi M."/>
            <person name="Halling C."/>
            <person name="Mullin L."/>
            <person name="Houmiel K."/>
            <person name="Gordon J."/>
            <person name="Vaudin M."/>
            <person name="Iartchouk O."/>
            <person name="Epp A."/>
            <person name="Liu F."/>
            <person name="Wollam C."/>
            <person name="Allinger M."/>
            <person name="Doughty D."/>
            <person name="Scott C."/>
            <person name="Lappas C."/>
            <person name="Markelz B."/>
            <person name="Flanagan C."/>
            <person name="Crowell C."/>
            <person name="Gurson J."/>
            <person name="Lomo C."/>
            <person name="Sear C."/>
            <person name="Strub G."/>
            <person name="Cielo C."/>
            <person name="Slater S."/>
        </authorList>
    </citation>
    <scope>NUCLEOTIDE SEQUENCE [LARGE SCALE GENOMIC DNA]</scope>
    <source>
        <strain>C58 / ATCC 33970</strain>
    </source>
</reference>
<keyword id="KW-0227">DNA damage</keyword>
<keyword id="KW-0233">DNA recombination</keyword>
<keyword id="KW-0234">DNA repair</keyword>
<keyword id="KW-1185">Reference proteome</keyword>